<protein>
    <recommendedName>
        <fullName>Uncharacterized protein KIAA0087</fullName>
    </recommendedName>
</protein>
<dbReference type="EMBL" id="D42038">
    <property type="protein sequence ID" value="BAA07639.2"/>
    <property type="status" value="ALT_INIT"/>
    <property type="molecule type" value="mRNA"/>
</dbReference>
<dbReference type="EMBL" id="AC004947">
    <property type="protein sequence ID" value="AAQ96877.1"/>
    <property type="molecule type" value="Genomic_DNA"/>
</dbReference>
<dbReference type="EMBL" id="CH236948">
    <property type="protein sequence ID" value="EAL24233.1"/>
    <property type="molecule type" value="Genomic_DNA"/>
</dbReference>
<dbReference type="EMBL" id="CH471073">
    <property type="protein sequence ID" value="EAW93856.1"/>
    <property type="molecule type" value="Genomic_DNA"/>
</dbReference>
<dbReference type="IntAct" id="Q14695">
    <property type="interactions" value="5"/>
</dbReference>
<dbReference type="iPTMnet" id="Q14695"/>
<dbReference type="PhosphoSitePlus" id="Q14695"/>
<dbReference type="BioMuta" id="HGNC:22191"/>
<dbReference type="DMDM" id="3183214"/>
<dbReference type="MassIVE" id="Q14695"/>
<dbReference type="PaxDb" id="9606-ENSP00000242109"/>
<dbReference type="PeptideAtlas" id="Q14695"/>
<dbReference type="ProteomicsDB" id="60135"/>
<dbReference type="AGR" id="HGNC:22191"/>
<dbReference type="GeneCards" id="KIAA0087"/>
<dbReference type="HGNC" id="HGNC:22191">
    <property type="gene designation" value="KIAA0087"/>
</dbReference>
<dbReference type="neXtProt" id="NX_Q14695"/>
<dbReference type="eggNOG" id="ENOG502TDVF">
    <property type="taxonomic scope" value="Eukaryota"/>
</dbReference>
<dbReference type="InParanoid" id="Q14695"/>
<dbReference type="PAN-GO" id="Q14695">
    <property type="GO annotations" value="0 GO annotations based on evolutionary models"/>
</dbReference>
<dbReference type="TreeFam" id="TF342481"/>
<dbReference type="PathwayCommons" id="Q14695"/>
<dbReference type="SignaLink" id="Q14695"/>
<dbReference type="Pharos" id="Q14695">
    <property type="development level" value="Tdark"/>
</dbReference>
<dbReference type="PRO" id="PR:Q14695"/>
<dbReference type="Proteomes" id="UP000005640">
    <property type="component" value="Unplaced"/>
</dbReference>
<dbReference type="RNAct" id="Q14695">
    <property type="molecule type" value="protein"/>
</dbReference>
<evidence type="ECO:0000269" key="1">
    <source>
    </source>
</evidence>
<evidence type="ECO:0000305" key="2"/>
<keyword id="KW-1185">Reference proteome</keyword>
<name>K0087_HUMAN</name>
<feature type="chain" id="PRO_0000050719" description="Uncharacterized protein KIAA0087">
    <location>
        <begin position="1"/>
        <end position="138"/>
    </location>
</feature>
<feature type="sequence variant" id="VAR_044539" description="In dbSNP:rs740182." evidence="1">
    <original>S</original>
    <variation>N</variation>
    <location>
        <position position="85"/>
    </location>
</feature>
<sequence length="138" mass="14937">MEAWESSQPLLRCEIPCPLPGTDRDGSVSLPGEAASCDLDTLEPEHGNRRVSGNPISVCWAYKVTKVKCWSVRERGGRHIGGPRSTLKHPAHHGMGKNLATSLPTAASLGLGKGQLLVSIRFMDTTKKRGQSETFNIC</sequence>
<organism>
    <name type="scientific">Homo sapiens</name>
    <name type="common">Human</name>
    <dbReference type="NCBI Taxonomy" id="9606"/>
    <lineage>
        <taxon>Eukaryota</taxon>
        <taxon>Metazoa</taxon>
        <taxon>Chordata</taxon>
        <taxon>Craniata</taxon>
        <taxon>Vertebrata</taxon>
        <taxon>Euteleostomi</taxon>
        <taxon>Mammalia</taxon>
        <taxon>Eutheria</taxon>
        <taxon>Euarchontoglires</taxon>
        <taxon>Primates</taxon>
        <taxon>Haplorrhini</taxon>
        <taxon>Catarrhini</taxon>
        <taxon>Hominidae</taxon>
        <taxon>Homo</taxon>
    </lineage>
</organism>
<gene>
    <name type="primary">KIAA0087</name>
    <name type="ORF">HA1002</name>
</gene>
<reference key="1">
    <citation type="journal article" date="1995" name="DNA Res.">
        <title>Prediction of the coding sequences of unidentified human genes. III. The coding sequences of 40 new genes (KIAA0081-KIAA0120) deduced by analysis of cDNA clones from human cell line KG-1.</title>
        <authorList>
            <person name="Nagase T."/>
            <person name="Miyajima N."/>
            <person name="Tanaka A."/>
            <person name="Sazuka T."/>
            <person name="Seki N."/>
            <person name="Sato S."/>
            <person name="Tabata S."/>
            <person name="Ishikawa K."/>
            <person name="Kawarabayasi Y."/>
            <person name="Kotani H."/>
            <person name="Nomura N."/>
        </authorList>
    </citation>
    <scope>NUCLEOTIDE SEQUENCE [LARGE SCALE MRNA]</scope>
    <source>
        <tissue>Bone marrow</tissue>
    </source>
</reference>
<reference key="2">
    <citation type="journal article" date="2003" name="Nature">
        <title>The DNA sequence of human chromosome 7.</title>
        <authorList>
            <person name="Hillier L.W."/>
            <person name="Fulton R.S."/>
            <person name="Fulton L.A."/>
            <person name="Graves T.A."/>
            <person name="Pepin K.H."/>
            <person name="Wagner-McPherson C."/>
            <person name="Layman D."/>
            <person name="Maas J."/>
            <person name="Jaeger S."/>
            <person name="Walker R."/>
            <person name="Wylie K."/>
            <person name="Sekhon M."/>
            <person name="Becker M.C."/>
            <person name="O'Laughlin M.D."/>
            <person name="Schaller M.E."/>
            <person name="Fewell G.A."/>
            <person name="Delehaunty K.D."/>
            <person name="Miner T.L."/>
            <person name="Nash W.E."/>
            <person name="Cordes M."/>
            <person name="Du H."/>
            <person name="Sun H."/>
            <person name="Edwards J."/>
            <person name="Bradshaw-Cordum H."/>
            <person name="Ali J."/>
            <person name="Andrews S."/>
            <person name="Isak A."/>
            <person name="Vanbrunt A."/>
            <person name="Nguyen C."/>
            <person name="Du F."/>
            <person name="Lamar B."/>
            <person name="Courtney L."/>
            <person name="Kalicki J."/>
            <person name="Ozersky P."/>
            <person name="Bielicki L."/>
            <person name="Scott K."/>
            <person name="Holmes A."/>
            <person name="Harkins R."/>
            <person name="Harris A."/>
            <person name="Strong C.M."/>
            <person name="Hou S."/>
            <person name="Tomlinson C."/>
            <person name="Dauphin-Kohlberg S."/>
            <person name="Kozlowicz-Reilly A."/>
            <person name="Leonard S."/>
            <person name="Rohlfing T."/>
            <person name="Rock S.M."/>
            <person name="Tin-Wollam A.-M."/>
            <person name="Abbott A."/>
            <person name="Minx P."/>
            <person name="Maupin R."/>
            <person name="Strowmatt C."/>
            <person name="Latreille P."/>
            <person name="Miller N."/>
            <person name="Johnson D."/>
            <person name="Murray J."/>
            <person name="Woessner J.P."/>
            <person name="Wendl M.C."/>
            <person name="Yang S.-P."/>
            <person name="Schultz B.R."/>
            <person name="Wallis J.W."/>
            <person name="Spieth J."/>
            <person name="Bieri T.A."/>
            <person name="Nelson J.O."/>
            <person name="Berkowicz N."/>
            <person name="Wohldmann P.E."/>
            <person name="Cook L.L."/>
            <person name="Hickenbotham M.T."/>
            <person name="Eldred J."/>
            <person name="Williams D."/>
            <person name="Bedell J.A."/>
            <person name="Mardis E.R."/>
            <person name="Clifton S.W."/>
            <person name="Chissoe S.L."/>
            <person name="Marra M.A."/>
            <person name="Raymond C."/>
            <person name="Haugen E."/>
            <person name="Gillett W."/>
            <person name="Zhou Y."/>
            <person name="James R."/>
            <person name="Phelps K."/>
            <person name="Iadanoto S."/>
            <person name="Bubb K."/>
            <person name="Simms E."/>
            <person name="Levy R."/>
            <person name="Clendenning J."/>
            <person name="Kaul R."/>
            <person name="Kent W.J."/>
            <person name="Furey T.S."/>
            <person name="Baertsch R.A."/>
            <person name="Brent M.R."/>
            <person name="Keibler E."/>
            <person name="Flicek P."/>
            <person name="Bork P."/>
            <person name="Suyama M."/>
            <person name="Bailey J.A."/>
            <person name="Portnoy M.E."/>
            <person name="Torrents D."/>
            <person name="Chinwalla A.T."/>
            <person name="Gish W.R."/>
            <person name="Eddy S.R."/>
            <person name="McPherson J.D."/>
            <person name="Olson M.V."/>
            <person name="Eichler E.E."/>
            <person name="Green E.D."/>
            <person name="Waterston R.H."/>
            <person name="Wilson R.K."/>
        </authorList>
    </citation>
    <scope>NUCLEOTIDE SEQUENCE [LARGE SCALE GENOMIC DNA]</scope>
    <scope>VARIANT ASN-85</scope>
</reference>
<reference key="3">
    <citation type="journal article" date="2003" name="Science">
        <title>Human chromosome 7: DNA sequence and biology.</title>
        <authorList>
            <person name="Scherer S.W."/>
            <person name="Cheung J."/>
            <person name="MacDonald J.R."/>
            <person name="Osborne L.R."/>
            <person name="Nakabayashi K."/>
            <person name="Herbrick J.-A."/>
            <person name="Carson A.R."/>
            <person name="Parker-Katiraee L."/>
            <person name="Skaug J."/>
            <person name="Khaja R."/>
            <person name="Zhang J."/>
            <person name="Hudek A.K."/>
            <person name="Li M."/>
            <person name="Haddad M."/>
            <person name="Duggan G.E."/>
            <person name="Fernandez B.A."/>
            <person name="Kanematsu E."/>
            <person name="Gentles S."/>
            <person name="Christopoulos C.C."/>
            <person name="Choufani S."/>
            <person name="Kwasnicka D."/>
            <person name="Zheng X.H."/>
            <person name="Lai Z."/>
            <person name="Nusskern D.R."/>
            <person name="Zhang Q."/>
            <person name="Gu Z."/>
            <person name="Lu F."/>
            <person name="Zeesman S."/>
            <person name="Nowaczyk M.J."/>
            <person name="Teshima I."/>
            <person name="Chitayat D."/>
            <person name="Shuman C."/>
            <person name="Weksberg R."/>
            <person name="Zackai E.H."/>
            <person name="Grebe T.A."/>
            <person name="Cox S.R."/>
            <person name="Kirkpatrick S.J."/>
            <person name="Rahman N."/>
            <person name="Friedman J.M."/>
            <person name="Heng H.H.Q."/>
            <person name="Pelicci P.G."/>
            <person name="Lo-Coco F."/>
            <person name="Belloni E."/>
            <person name="Shaffer L.G."/>
            <person name="Pober B."/>
            <person name="Morton C.C."/>
            <person name="Gusella J.F."/>
            <person name="Bruns G.A.P."/>
            <person name="Korf B.R."/>
            <person name="Quade B.J."/>
            <person name="Ligon A.H."/>
            <person name="Ferguson H."/>
            <person name="Higgins A.W."/>
            <person name="Leach N.T."/>
            <person name="Herrick S.R."/>
            <person name="Lemyre E."/>
            <person name="Farra C.G."/>
            <person name="Kim H.-G."/>
            <person name="Summers A.M."/>
            <person name="Gripp K.W."/>
            <person name="Roberts W."/>
            <person name="Szatmari P."/>
            <person name="Winsor E.J.T."/>
            <person name="Grzeschik K.-H."/>
            <person name="Teebi A."/>
            <person name="Minassian B.A."/>
            <person name="Kere J."/>
            <person name="Armengol L."/>
            <person name="Pujana M.A."/>
            <person name="Estivill X."/>
            <person name="Wilson M.D."/>
            <person name="Koop B.F."/>
            <person name="Tosi S."/>
            <person name="Moore G.E."/>
            <person name="Boright A.P."/>
            <person name="Zlotorynski E."/>
            <person name="Kerem B."/>
            <person name="Kroisel P.M."/>
            <person name="Petek E."/>
            <person name="Oscier D.G."/>
            <person name="Mould S.J."/>
            <person name="Doehner H."/>
            <person name="Doehner K."/>
            <person name="Rommens J.M."/>
            <person name="Vincent J.B."/>
            <person name="Venter J.C."/>
            <person name="Li P.W."/>
            <person name="Mural R.J."/>
            <person name="Adams M.D."/>
            <person name="Tsui L.-C."/>
        </authorList>
    </citation>
    <scope>NUCLEOTIDE SEQUENCE [LARGE SCALE GENOMIC DNA]</scope>
</reference>
<reference key="4">
    <citation type="submission" date="2005-07" db="EMBL/GenBank/DDBJ databases">
        <authorList>
            <person name="Mural R.J."/>
            <person name="Istrail S."/>
            <person name="Sutton G.G."/>
            <person name="Florea L."/>
            <person name="Halpern A.L."/>
            <person name="Mobarry C.M."/>
            <person name="Lippert R."/>
            <person name="Walenz B."/>
            <person name="Shatkay H."/>
            <person name="Dew I."/>
            <person name="Miller J.R."/>
            <person name="Flanigan M.J."/>
            <person name="Edwards N.J."/>
            <person name="Bolanos R."/>
            <person name="Fasulo D."/>
            <person name="Halldorsson B.V."/>
            <person name="Hannenhalli S."/>
            <person name="Turner R."/>
            <person name="Yooseph S."/>
            <person name="Lu F."/>
            <person name="Nusskern D.R."/>
            <person name="Shue B.C."/>
            <person name="Zheng X.H."/>
            <person name="Zhong F."/>
            <person name="Delcher A.L."/>
            <person name="Huson D.H."/>
            <person name="Kravitz S.A."/>
            <person name="Mouchard L."/>
            <person name="Reinert K."/>
            <person name="Remington K.A."/>
            <person name="Clark A.G."/>
            <person name="Waterman M.S."/>
            <person name="Eichler E.E."/>
            <person name="Adams M.D."/>
            <person name="Hunkapiller M.W."/>
            <person name="Myers E.W."/>
            <person name="Venter J.C."/>
        </authorList>
    </citation>
    <scope>NUCLEOTIDE SEQUENCE [LARGE SCALE GENOMIC DNA]</scope>
</reference>
<accession>Q14695</accession>
<accession>A1A524</accession>
<accession>Q75MW1</accession>
<comment type="sequence caution" evidence="2">
    <conflict type="erroneous initiation">
        <sequence resource="EMBL-CDS" id="BAA07639"/>
    </conflict>
</comment>
<proteinExistence type="evidence at transcript level"/>